<name>ATG4_ASPOR</name>
<evidence type="ECO:0000250" key="1">
    <source>
        <dbReference type="UniProtKB" id="P53867"/>
    </source>
</evidence>
<evidence type="ECO:0000250" key="2">
    <source>
        <dbReference type="UniProtKB" id="Q9Y4P1"/>
    </source>
</evidence>
<evidence type="ECO:0000269" key="3">
    <source>
    </source>
</evidence>
<evidence type="ECO:0000303" key="4">
    <source>
    </source>
</evidence>
<evidence type="ECO:0000305" key="5"/>
<proteinExistence type="inferred from homology"/>
<organism>
    <name type="scientific">Aspergillus oryzae (strain ATCC 42149 / RIB 40)</name>
    <name type="common">Yellow koji mold</name>
    <dbReference type="NCBI Taxonomy" id="510516"/>
    <lineage>
        <taxon>Eukaryota</taxon>
        <taxon>Fungi</taxon>
        <taxon>Dikarya</taxon>
        <taxon>Ascomycota</taxon>
        <taxon>Pezizomycotina</taxon>
        <taxon>Eurotiomycetes</taxon>
        <taxon>Eurotiomycetidae</taxon>
        <taxon>Eurotiales</taxon>
        <taxon>Aspergillaceae</taxon>
        <taxon>Aspergillus</taxon>
        <taxon>Aspergillus subgen. Circumdati</taxon>
    </lineage>
</organism>
<accession>Q2U5B0</accession>
<accession>E9RH15</accession>
<dbReference type="EC" id="3.4.22.-" evidence="1"/>
<dbReference type="EMBL" id="AB586122">
    <property type="protein sequence ID" value="BAJ83603.1"/>
    <property type="status" value="ALT_SEQ"/>
    <property type="molecule type" value="Genomic_DNA"/>
</dbReference>
<dbReference type="EMBL" id="BA000054">
    <property type="protein sequence ID" value="BAE63255.1"/>
    <property type="status" value="ALT_SEQ"/>
    <property type="molecule type" value="Genomic_DNA"/>
</dbReference>
<dbReference type="SMR" id="Q2U5B0"/>
<dbReference type="STRING" id="510516.Q2U5B0"/>
<dbReference type="MEROPS" id="C54.001"/>
<dbReference type="VEuPathDB" id="FungiDB:AO090020000005"/>
<dbReference type="Proteomes" id="UP000006564">
    <property type="component" value="Chromosome 6"/>
</dbReference>
<dbReference type="GO" id="GO:0005634">
    <property type="term" value="C:nucleus"/>
    <property type="evidence" value="ECO:0007669"/>
    <property type="project" value="UniProtKB-SubCell"/>
</dbReference>
<dbReference type="GO" id="GO:0000407">
    <property type="term" value="C:phagophore assembly site"/>
    <property type="evidence" value="ECO:0007669"/>
    <property type="project" value="UniProtKB-SubCell"/>
</dbReference>
<dbReference type="GO" id="GO:0004197">
    <property type="term" value="F:cysteine-type endopeptidase activity"/>
    <property type="evidence" value="ECO:0007669"/>
    <property type="project" value="TreeGrafter"/>
</dbReference>
<dbReference type="GO" id="GO:0019786">
    <property type="term" value="F:protein-phosphatidylethanolamide deconjugating activity"/>
    <property type="evidence" value="ECO:0007669"/>
    <property type="project" value="InterPro"/>
</dbReference>
<dbReference type="GO" id="GO:0035973">
    <property type="term" value="P:aggrephagy"/>
    <property type="evidence" value="ECO:0007669"/>
    <property type="project" value="TreeGrafter"/>
</dbReference>
<dbReference type="GO" id="GO:0043936">
    <property type="term" value="P:asexual sporulation resulting in formation of a cellular spore"/>
    <property type="evidence" value="ECO:0000315"/>
    <property type="project" value="UniProtKB"/>
</dbReference>
<dbReference type="GO" id="GO:0000045">
    <property type="term" value="P:autophagosome assembly"/>
    <property type="evidence" value="ECO:0000315"/>
    <property type="project" value="UniProtKB"/>
</dbReference>
<dbReference type="GO" id="GO:0000423">
    <property type="term" value="P:mitophagy"/>
    <property type="evidence" value="ECO:0007669"/>
    <property type="project" value="TreeGrafter"/>
</dbReference>
<dbReference type="GO" id="GO:0034727">
    <property type="term" value="P:piecemeal microautophagy of the nucleus"/>
    <property type="evidence" value="ECO:0007669"/>
    <property type="project" value="TreeGrafter"/>
</dbReference>
<dbReference type="GO" id="GO:0016485">
    <property type="term" value="P:protein processing"/>
    <property type="evidence" value="ECO:0007669"/>
    <property type="project" value="TreeGrafter"/>
</dbReference>
<dbReference type="GO" id="GO:0009306">
    <property type="term" value="P:protein secretion"/>
    <property type="evidence" value="ECO:0000315"/>
    <property type="project" value="UniProtKB"/>
</dbReference>
<dbReference type="InterPro" id="IPR038765">
    <property type="entry name" value="Papain-like_cys_pep_sf"/>
</dbReference>
<dbReference type="InterPro" id="IPR005078">
    <property type="entry name" value="Peptidase_C54"/>
</dbReference>
<dbReference type="InterPro" id="IPR046792">
    <property type="entry name" value="Peptidase_C54_cat"/>
</dbReference>
<dbReference type="PANTHER" id="PTHR22624:SF49">
    <property type="entry name" value="CYSTEINE PROTEASE"/>
    <property type="match status" value="1"/>
</dbReference>
<dbReference type="PANTHER" id="PTHR22624">
    <property type="entry name" value="CYSTEINE PROTEASE ATG4"/>
    <property type="match status" value="1"/>
</dbReference>
<dbReference type="Pfam" id="PF03416">
    <property type="entry name" value="Peptidase_C54"/>
    <property type="match status" value="1"/>
</dbReference>
<dbReference type="SUPFAM" id="SSF54001">
    <property type="entry name" value="Cysteine proteinases"/>
    <property type="match status" value="1"/>
</dbReference>
<gene>
    <name evidence="4" type="primary">atg4</name>
    <name type="ORF">AO090020000005</name>
</gene>
<protein>
    <recommendedName>
        <fullName evidence="4">Probable cysteine protease atg4</fullName>
        <ecNumber evidence="1">3.4.22.-</ecNumber>
    </recommendedName>
    <alternativeName>
        <fullName evidence="4">Autophagy-related protein 4</fullName>
    </alternativeName>
</protein>
<keyword id="KW-0072">Autophagy</keyword>
<keyword id="KW-0963">Cytoplasm</keyword>
<keyword id="KW-0378">Hydrolase</keyword>
<keyword id="KW-0539">Nucleus</keyword>
<keyword id="KW-0645">Protease</keyword>
<keyword id="KW-0653">Protein transport</keyword>
<keyword id="KW-1185">Reference proteome</keyword>
<keyword id="KW-0788">Thiol protease</keyword>
<keyword id="KW-0813">Transport</keyword>
<sequence length="407" mass="45512">MNSVDIGRCRKRIVQYIWDPEPRNDEEPDASIWCLGVEYAPQPQKITANTTPGKLGNYQDELEAGTSKIDDVTAHGWPEAFVSDFESKIWMTYRSDFPPIPRLDNDEANHPMTLTVRIRTQLMDPQGFTSDTGWGCMIRSGQSLLANAMLTLCLGRDWRRGDKAEEEARLLSLFADHPDAPLSIHRFVKYGAESCGKHPGEWFGPSATARCIEALSAQCGNIAPRVYVTNDTSDVYEDSFLRVARSGSGSIQPTLILLGTRLGIDNVTPVYWDGLKAVLQLPQSVGIAGGRPSASHYFIGTQGPHFFYLDPHTTRPAVPYSIDGRLLSKTEISTYHTRRLRRIHIQDMDPSMLIGFLVRNEDDWEDWKGRVGSVVGKQIIHVFKGEEATYNQGRRGALDEVEALDDA</sequence>
<reference key="1">
    <citation type="journal article" date="2011" name="FEMS Microbiol. Lett.">
        <title>Analysis of autophagy in Aspergillus oryzae by disruption of Aoatg13, Aoatg4, and Aoatg15 genes.</title>
        <authorList>
            <person name="Kikuma T."/>
            <person name="Kitamoto K."/>
        </authorList>
    </citation>
    <scope>NUCLEOTIDE SEQUENCE [GENOMIC DNA]</scope>
    <scope>FUNCTION</scope>
    <scope>DISRUPTION PHENOTYPE</scope>
    <source>
        <strain>ATCC 42149 / RIB 40</strain>
    </source>
</reference>
<reference key="2">
    <citation type="journal article" date="2005" name="Nature">
        <title>Genome sequencing and analysis of Aspergillus oryzae.</title>
        <authorList>
            <person name="Machida M."/>
            <person name="Asai K."/>
            <person name="Sano M."/>
            <person name="Tanaka T."/>
            <person name="Kumagai T."/>
            <person name="Terai G."/>
            <person name="Kusumoto K."/>
            <person name="Arima T."/>
            <person name="Akita O."/>
            <person name="Kashiwagi Y."/>
            <person name="Abe K."/>
            <person name="Gomi K."/>
            <person name="Horiuchi H."/>
            <person name="Kitamoto K."/>
            <person name="Kobayashi T."/>
            <person name="Takeuchi M."/>
            <person name="Denning D.W."/>
            <person name="Galagan J.E."/>
            <person name="Nierman W.C."/>
            <person name="Yu J."/>
            <person name="Archer D.B."/>
            <person name="Bennett J.W."/>
            <person name="Bhatnagar D."/>
            <person name="Cleveland T.E."/>
            <person name="Fedorova N.D."/>
            <person name="Gotoh O."/>
            <person name="Horikawa H."/>
            <person name="Hosoyama A."/>
            <person name="Ichinomiya M."/>
            <person name="Igarashi R."/>
            <person name="Iwashita K."/>
            <person name="Juvvadi P.R."/>
            <person name="Kato M."/>
            <person name="Kato Y."/>
            <person name="Kin T."/>
            <person name="Kokubun A."/>
            <person name="Maeda H."/>
            <person name="Maeyama N."/>
            <person name="Maruyama J."/>
            <person name="Nagasaki H."/>
            <person name="Nakajima T."/>
            <person name="Oda K."/>
            <person name="Okada K."/>
            <person name="Paulsen I."/>
            <person name="Sakamoto K."/>
            <person name="Sawano T."/>
            <person name="Takahashi M."/>
            <person name="Takase K."/>
            <person name="Terabayashi Y."/>
            <person name="Wortman J.R."/>
            <person name="Yamada O."/>
            <person name="Yamagata Y."/>
            <person name="Anazawa H."/>
            <person name="Hata Y."/>
            <person name="Koide Y."/>
            <person name="Komori T."/>
            <person name="Koyama Y."/>
            <person name="Minetoki T."/>
            <person name="Suharnan S."/>
            <person name="Tanaka A."/>
            <person name="Isono K."/>
            <person name="Kuhara S."/>
            <person name="Ogasawara N."/>
            <person name="Kikuchi H."/>
        </authorList>
    </citation>
    <scope>NUCLEOTIDE SEQUENCE [LARGE SCALE GENOMIC DNA]</scope>
    <source>
        <strain>ATCC 42149 / RIB 40</strain>
    </source>
</reference>
<feature type="chain" id="PRO_0000317834" description="Probable cysteine protease atg4">
    <location>
        <begin position="1"/>
        <end position="407"/>
    </location>
</feature>
<feature type="active site" description="Nucleophile" evidence="2">
    <location>
        <position position="136"/>
    </location>
</feature>
<feature type="active site" evidence="2">
    <location>
        <position position="310"/>
    </location>
</feature>
<feature type="active site" evidence="2">
    <location>
        <position position="312"/>
    </location>
</feature>
<comment type="function">
    <text evidence="1 3">Cysteine protease that is required for autophagy (PubMed:21204928). Plays a key role in cytoplasm to vacuole transport (Cvt) and autophagy by mediating both proteolytic activation and delipidation of atg8 (By similarity). The protease activity is required for proteolytic activation of atg8 by the cleavage of the C-terminal amino acid of atg8 to reveal a C-terminal glycine (By similarity). Azg8 ubiquitin-like activity requires the exposure of the glycine at the C-terminus for its conjugation to phosphatidylethanolamine (PE) and its insertion to membranes, which is necessary for autophagy (By similarity). The atg8-PE conjugate mediates tethering between adjacent membranes and stimulates membrane hemifusion, leading to expansion of the autophagosomal membrane during autophagy (By similarity). In addition to the protease activity, also catalyzes deconjugation of PE-conjugated forms of atg8 during macroautophagy since atg8 delipidation is required to release the protein from membranes, which facilitates multiple events during macroautophagy, and especially for efficient autophagosome biogenesis, the assembly of atg99-containing tubulovesicular clusters into phagophores/autophagosomes, and for the disassembly of PAS-associated ATG components (By similarity). Atg8 delipidation by atg4 also recycles atg8-PE generated on inappropriate membranes to maintain a reservoir of unlipidated atg8 that is required for autophagosome formation at the PAS (By similarity).</text>
</comment>
<comment type="catalytic activity">
    <reaction evidence="1">
        <text>[protein]-C-terminal L-amino acid-glycyl-phosphatidylethanolamide + H2O = [protein]-C-terminal L-amino acid-glycine + a 1,2-diacyl-sn-glycero-3-phosphoethanolamine</text>
        <dbReference type="Rhea" id="RHEA:67548"/>
        <dbReference type="Rhea" id="RHEA-COMP:17323"/>
        <dbReference type="Rhea" id="RHEA-COMP:17324"/>
        <dbReference type="ChEBI" id="CHEBI:15377"/>
        <dbReference type="ChEBI" id="CHEBI:64612"/>
        <dbReference type="ChEBI" id="CHEBI:172940"/>
        <dbReference type="ChEBI" id="CHEBI:172941"/>
    </reaction>
    <physiologicalReaction direction="left-to-right" evidence="1">
        <dbReference type="Rhea" id="RHEA:67549"/>
    </physiologicalReaction>
</comment>
<comment type="subcellular location">
    <subcellularLocation>
        <location evidence="1">Cytoplasm</location>
    </subcellularLocation>
    <subcellularLocation>
        <location evidence="1">Nucleus</location>
    </subcellularLocation>
    <subcellularLocation>
        <location evidence="1">Preautophagosomal structure</location>
    </subcellularLocation>
</comment>
<comment type="disruption phenotype">
    <text evidence="3">Impairs autophagy.</text>
</comment>
<comment type="similarity">
    <text evidence="5">Belongs to the peptidase C54 family.</text>
</comment>
<comment type="sequence caution" evidence="5">
    <conflict type="erroneous gene model prediction">
        <sequence resource="EMBL-CDS" id="BAE63255"/>
    </conflict>
</comment>
<comment type="sequence caution" evidence="5">
    <conflict type="erroneous gene model prediction">
        <sequence resource="EMBL-CDS" id="BAJ83603"/>
    </conflict>
</comment>